<reference key="1">
    <citation type="journal article" date="1999" name="Biochem. J.">
        <title>Regulation of intestinal Na+-dependent phosphate co-transporters by a low-phosphate diet and 1,25-dihydroxyvitamin D3.</title>
        <authorList>
            <person name="Katai K."/>
            <person name="Miyamoto K."/>
            <person name="Kishida S."/>
            <person name="Segawa H."/>
            <person name="Nii T."/>
            <person name="Tanaka H."/>
            <person name="Tani Y."/>
            <person name="Arai H."/>
            <person name="Tatsumi S."/>
            <person name="Morita K."/>
            <person name="Taketani Y."/>
            <person name="Takeda E."/>
        </authorList>
    </citation>
    <scope>NUCLEOTIDE SEQUENCE [MRNA]</scope>
    <scope>PRELIMINARY FUNCTION</scope>
    <scope>TISSUE SPECIFICITY</scope>
    <source>
        <tissue>Small intestine</tissue>
    </source>
</reference>
<reference key="2">
    <citation type="journal article" date="2004" name="Genome Res.">
        <title>The status, quality, and expansion of the NIH full-length cDNA project: the Mammalian Gene Collection (MGC).</title>
        <authorList>
            <consortium name="The MGC Project Team"/>
        </authorList>
    </citation>
    <scope>NUCLEOTIDE SEQUENCE [LARGE SCALE MRNA]</scope>
    <source>
        <tissue>Testis</tissue>
    </source>
</reference>
<keyword id="KW-0067">ATP-binding</keyword>
<keyword id="KW-0418">Kinase</keyword>
<keyword id="KW-0443">Lipid metabolism</keyword>
<keyword id="KW-0547">Nucleotide-binding</keyword>
<keyword id="KW-0539">Nucleus</keyword>
<keyword id="KW-1208">Phospholipid metabolism</keyword>
<keyword id="KW-1185">Reference proteome</keyword>
<keyword id="KW-0808">Transferase</keyword>
<sequence>MSPAFRTMDVEPRTKGILLEPFVHQVGGHSCVLRFNETTLCKPLVPREHQFYETLPAEMRRFTPQYKGVVSVRFEEDEDRNLCLIAYPLKGDHGPVDIVDNSDCEPKSKLLRWTNKKHHVLETEKSPKDWVRQHRKEEKMKSHKLEEEFEWLKKSEVLYYSVEKKGTVSSQLKHYNPWSMKCHQQQLQRMKENAKHRNQYKFILLENLTCRYEVPCVLDLKMGTRQHGDDASEEKAANQIRKCQQSTSAVIGVRVCGMQVYQAGTGQLMFMNKYHGRKLSVQGFKEALFQFFHNGRYLRRELLGPVLKKLTELKAVLERQESYRFYSSSLLVIYDGKEWPEVTLDSDAEDLEDLSEESADESAGAYAYKPLGASSVDVRMIDFAHTTCRLYGEDSVVHEGQDAGYIFGLQSLIDIVTEISEESGE</sequence>
<gene>
    <name type="primary">Ip6k2</name>
    <name type="synonym">Ihpk2</name>
    <name type="synonym">Pius</name>
</gene>
<organism>
    <name type="scientific">Rattus norvegicus</name>
    <name type="common">Rat</name>
    <dbReference type="NCBI Taxonomy" id="10116"/>
    <lineage>
        <taxon>Eukaryota</taxon>
        <taxon>Metazoa</taxon>
        <taxon>Chordata</taxon>
        <taxon>Craniata</taxon>
        <taxon>Vertebrata</taxon>
        <taxon>Euteleostomi</taxon>
        <taxon>Mammalia</taxon>
        <taxon>Eutheria</taxon>
        <taxon>Euarchontoglires</taxon>
        <taxon>Glires</taxon>
        <taxon>Rodentia</taxon>
        <taxon>Myomorpha</taxon>
        <taxon>Muroidea</taxon>
        <taxon>Muridae</taxon>
        <taxon>Murinae</taxon>
        <taxon>Rattus</taxon>
    </lineage>
</organism>
<accession>Q9R0U1</accession>
<accession>Q5XIU6</accession>
<proteinExistence type="evidence at transcript level"/>
<protein>
    <recommendedName>
        <fullName>Inositol hexakisphosphate kinase 2</fullName>
        <shortName>InsP6 kinase 2</shortName>
        <ecNumber evidence="3">2.7.4.-</ecNumber>
    </recommendedName>
    <alternativeName>
        <fullName evidence="5">P(i)-uptake stimulator</fullName>
        <shortName evidence="5">PiUS</shortName>
    </alternativeName>
</protein>
<comment type="function">
    <text evidence="3">Converts inositol hexakisphosphate (InsP6) to diphosphoinositol pentakisphosphate (InsP7/PP-InsP5).</text>
</comment>
<comment type="catalytic activity">
    <reaction>
        <text>1D-myo-inositol hexakisphosphate + ATP = 5-diphospho-1D-myo-inositol 1,2,3,4,6-pentakisphosphate + ADP</text>
        <dbReference type="Rhea" id="RHEA:12793"/>
        <dbReference type="ChEBI" id="CHEBI:30616"/>
        <dbReference type="ChEBI" id="CHEBI:58130"/>
        <dbReference type="ChEBI" id="CHEBI:58628"/>
        <dbReference type="ChEBI" id="CHEBI:456216"/>
    </reaction>
</comment>
<comment type="pathway">
    <text evidence="3">Phospholipid metabolism; phosphatidylinositol metabolism.</text>
</comment>
<comment type="subcellular location">
    <subcellularLocation>
        <location evidence="3">Nucleus</location>
    </subcellularLocation>
</comment>
<comment type="tissue specificity">
    <text evidence="4">Highly expressed in small intestine.</text>
</comment>
<comment type="similarity">
    <text evidence="6">Belongs to the inositol phosphokinase (IPK) family.</text>
</comment>
<comment type="caution">
    <text evidence="4">Was first identified because of its ability to stimulate Na(+)-dependent phosphate cotransport.</text>
</comment>
<comment type="sequence caution" evidence="6">
    <conflict type="miscellaneous discrepancy">
        <sequence resource="EMBL-CDS" id="BAA87611"/>
    </conflict>
    <text>Chimeric cDNA.</text>
</comment>
<evidence type="ECO:0000250" key="1"/>
<evidence type="ECO:0000250" key="2">
    <source>
        <dbReference type="UniProtKB" id="Q8NFU5"/>
    </source>
</evidence>
<evidence type="ECO:0000250" key="3">
    <source>
        <dbReference type="UniProtKB" id="Q9UHH9"/>
    </source>
</evidence>
<evidence type="ECO:0000269" key="4">
    <source>
    </source>
</evidence>
<evidence type="ECO:0000303" key="5">
    <source>
    </source>
</evidence>
<evidence type="ECO:0000305" key="6"/>
<name>IP6K2_RAT</name>
<feature type="chain" id="PRO_0000066880" description="Inositol hexakisphosphate kinase 2">
    <location>
        <begin position="1"/>
        <end position="425"/>
    </location>
</feature>
<feature type="binding site" evidence="2">
    <location>
        <begin position="206"/>
        <end position="208"/>
    </location>
    <ligand>
        <name>ATP</name>
        <dbReference type="ChEBI" id="CHEBI:30616"/>
    </ligand>
</feature>
<feature type="binding site" evidence="1">
    <location>
        <begin position="215"/>
        <end position="223"/>
    </location>
    <ligand>
        <name>substrate</name>
    </ligand>
</feature>
<feature type="binding site" evidence="2">
    <location>
        <position position="219"/>
    </location>
    <ligand>
        <name>ATP</name>
        <dbReference type="ChEBI" id="CHEBI:30616"/>
    </ligand>
</feature>
<feature type="binding site" evidence="2">
    <location>
        <position position="221"/>
    </location>
    <ligand>
        <name>substrate</name>
    </ligand>
</feature>
<feature type="binding site" evidence="2">
    <location>
        <begin position="235"/>
        <end position="242"/>
    </location>
    <ligand>
        <name>substrate</name>
    </ligand>
</feature>
<feature type="binding site" evidence="2">
    <location>
        <position position="382"/>
    </location>
    <ligand>
        <name>ATP</name>
        <dbReference type="ChEBI" id="CHEBI:30616"/>
    </ligand>
</feature>
<feature type="binding site" evidence="2">
    <location>
        <position position="385"/>
    </location>
    <ligand>
        <name>substrate</name>
    </ligand>
</feature>
<dbReference type="EC" id="2.7.4.-" evidence="3"/>
<dbReference type="EMBL" id="AB015723">
    <property type="protein sequence ID" value="BAA87611.1"/>
    <property type="status" value="ALT_SEQ"/>
    <property type="molecule type" value="mRNA"/>
</dbReference>
<dbReference type="EMBL" id="BC083574">
    <property type="protein sequence ID" value="AAH83574.1"/>
    <property type="molecule type" value="mRNA"/>
</dbReference>
<dbReference type="RefSeq" id="NP_001418518.1">
    <property type="nucleotide sequence ID" value="NM_001431589.1"/>
</dbReference>
<dbReference type="RefSeq" id="NP_067692.2">
    <property type="nucleotide sequence ID" value="NM_021660.2"/>
</dbReference>
<dbReference type="RefSeq" id="XP_008764786.1">
    <property type="nucleotide sequence ID" value="XM_008766564.2"/>
</dbReference>
<dbReference type="RefSeq" id="XP_038937971.1">
    <property type="nucleotide sequence ID" value="XM_039082043.2"/>
</dbReference>
<dbReference type="RefSeq" id="XP_063122126.1">
    <property type="nucleotide sequence ID" value="XM_063266056.1"/>
</dbReference>
<dbReference type="SMR" id="Q9R0U1"/>
<dbReference type="FunCoup" id="Q9R0U1">
    <property type="interactions" value="2729"/>
</dbReference>
<dbReference type="STRING" id="10116.ENSRNOP00000027584"/>
<dbReference type="PhosphoSitePlus" id="Q9R0U1"/>
<dbReference type="PaxDb" id="10116-ENSRNOP00000027584"/>
<dbReference type="Ensembl" id="ENSRNOT00000077078.2">
    <property type="protein sequence ID" value="ENSRNOP00000071056.1"/>
    <property type="gene ID" value="ENSRNOG00000020361.8"/>
</dbReference>
<dbReference type="GeneID" id="59268"/>
<dbReference type="KEGG" id="rno:59268"/>
<dbReference type="UCSC" id="RGD:620529">
    <property type="organism name" value="rat"/>
</dbReference>
<dbReference type="AGR" id="RGD:620529"/>
<dbReference type="CTD" id="51447"/>
<dbReference type="RGD" id="620529">
    <property type="gene designation" value="Ip6k2"/>
</dbReference>
<dbReference type="eggNOG" id="KOG1620">
    <property type="taxonomic scope" value="Eukaryota"/>
</dbReference>
<dbReference type="GeneTree" id="ENSGT00940000156310"/>
<dbReference type="InParanoid" id="Q9R0U1"/>
<dbReference type="PhylomeDB" id="Q9R0U1"/>
<dbReference type="Reactome" id="R-RNO-1855191">
    <property type="pathway name" value="Synthesis of IPs in the nucleus"/>
</dbReference>
<dbReference type="UniPathway" id="UPA00949"/>
<dbReference type="PRO" id="PR:Q9R0U1"/>
<dbReference type="Proteomes" id="UP000002494">
    <property type="component" value="Chromosome 8"/>
</dbReference>
<dbReference type="Bgee" id="ENSRNOG00000020361">
    <property type="expression patterns" value="Expressed in ovary and 20 other cell types or tissues"/>
</dbReference>
<dbReference type="GO" id="GO:0005737">
    <property type="term" value="C:cytoplasm"/>
    <property type="evidence" value="ECO:0000318"/>
    <property type="project" value="GO_Central"/>
</dbReference>
<dbReference type="GO" id="GO:0005634">
    <property type="term" value="C:nucleus"/>
    <property type="evidence" value="ECO:0000266"/>
    <property type="project" value="RGD"/>
</dbReference>
<dbReference type="GO" id="GO:0005524">
    <property type="term" value="F:ATP binding"/>
    <property type="evidence" value="ECO:0007669"/>
    <property type="project" value="UniProtKB-KW"/>
</dbReference>
<dbReference type="GO" id="GO:0097243">
    <property type="term" value="F:flavonoid binding"/>
    <property type="evidence" value="ECO:0000250"/>
    <property type="project" value="UniProtKB"/>
</dbReference>
<dbReference type="GO" id="GO:0000832">
    <property type="term" value="F:inositol hexakisphosphate 5-kinase activity"/>
    <property type="evidence" value="ECO:0000250"/>
    <property type="project" value="UniProtKB"/>
</dbReference>
<dbReference type="GO" id="GO:0000828">
    <property type="term" value="F:inositol hexakisphosphate kinase activity"/>
    <property type="evidence" value="ECO:0000266"/>
    <property type="project" value="RGD"/>
</dbReference>
<dbReference type="GO" id="GO:1905396">
    <property type="term" value="P:cellular response to flavonoid"/>
    <property type="evidence" value="ECO:0000250"/>
    <property type="project" value="UniProtKB"/>
</dbReference>
<dbReference type="GO" id="GO:0032958">
    <property type="term" value="P:inositol phosphate biosynthetic process"/>
    <property type="evidence" value="ECO:0000266"/>
    <property type="project" value="RGD"/>
</dbReference>
<dbReference type="GO" id="GO:0043647">
    <property type="term" value="P:inositol phosphate metabolic process"/>
    <property type="evidence" value="ECO:0000250"/>
    <property type="project" value="UniProtKB"/>
</dbReference>
<dbReference type="GO" id="GO:0030308">
    <property type="term" value="P:negative regulation of cell growth"/>
    <property type="evidence" value="ECO:0000266"/>
    <property type="project" value="RGD"/>
</dbReference>
<dbReference type="GO" id="GO:0006817">
    <property type="term" value="P:phosphate ion transport"/>
    <property type="evidence" value="ECO:0000314"/>
    <property type="project" value="RGD"/>
</dbReference>
<dbReference type="GO" id="GO:0046854">
    <property type="term" value="P:phosphatidylinositol phosphate biosynthetic process"/>
    <property type="evidence" value="ECO:0000266"/>
    <property type="project" value="RGD"/>
</dbReference>
<dbReference type="GO" id="GO:0043065">
    <property type="term" value="P:positive regulation of apoptotic process"/>
    <property type="evidence" value="ECO:0000266"/>
    <property type="project" value="RGD"/>
</dbReference>
<dbReference type="GO" id="GO:0050821">
    <property type="term" value="P:protein stabilization"/>
    <property type="evidence" value="ECO:0000266"/>
    <property type="project" value="RGD"/>
</dbReference>
<dbReference type="FunFam" id="3.30.470.160:FF:000002">
    <property type="entry name" value="Kinase"/>
    <property type="match status" value="1"/>
</dbReference>
<dbReference type="Gene3D" id="3.30.470.160">
    <property type="entry name" value="Inositol polyphosphate kinase"/>
    <property type="match status" value="1"/>
</dbReference>
<dbReference type="InterPro" id="IPR005522">
    <property type="entry name" value="IPK"/>
</dbReference>
<dbReference type="InterPro" id="IPR038286">
    <property type="entry name" value="IPK_sf"/>
</dbReference>
<dbReference type="PANTHER" id="PTHR12400:SF47">
    <property type="entry name" value="INOSITOL HEXAKISPHOSPHATE KINASE 2"/>
    <property type="match status" value="1"/>
</dbReference>
<dbReference type="PANTHER" id="PTHR12400">
    <property type="entry name" value="INOSITOL POLYPHOSPHATE KINASE"/>
    <property type="match status" value="1"/>
</dbReference>
<dbReference type="Pfam" id="PF03770">
    <property type="entry name" value="IPK"/>
    <property type="match status" value="1"/>
</dbReference>
<dbReference type="SUPFAM" id="SSF56104">
    <property type="entry name" value="SAICAR synthase-like"/>
    <property type="match status" value="1"/>
</dbReference>